<feature type="chain" id="PRO_0000228579" description="Ribonuclease 3">
    <location>
        <begin position="1"/>
        <end position="226"/>
    </location>
</feature>
<feature type="domain" description="RNase III" evidence="1">
    <location>
        <begin position="7"/>
        <end position="129"/>
    </location>
</feature>
<feature type="domain" description="DRBM" evidence="1">
    <location>
        <begin position="156"/>
        <end position="226"/>
    </location>
</feature>
<feature type="active site" evidence="1">
    <location>
        <position position="46"/>
    </location>
</feature>
<feature type="active site" evidence="1">
    <location>
        <position position="118"/>
    </location>
</feature>
<feature type="binding site" evidence="1">
    <location>
        <position position="42"/>
    </location>
    <ligand>
        <name>Mg(2+)</name>
        <dbReference type="ChEBI" id="CHEBI:18420"/>
    </ligand>
</feature>
<feature type="binding site" evidence="1">
    <location>
        <position position="115"/>
    </location>
    <ligand>
        <name>Mg(2+)</name>
        <dbReference type="ChEBI" id="CHEBI:18420"/>
    </ligand>
</feature>
<feature type="binding site" evidence="1">
    <location>
        <position position="118"/>
    </location>
    <ligand>
        <name>Mg(2+)</name>
        <dbReference type="ChEBI" id="CHEBI:18420"/>
    </ligand>
</feature>
<organism>
    <name type="scientific">Shewanella oneidensis (strain ATCC 700550 / JCM 31522 / CIP 106686 / LMG 19005 / NCIMB 14063 / MR-1)</name>
    <dbReference type="NCBI Taxonomy" id="211586"/>
    <lineage>
        <taxon>Bacteria</taxon>
        <taxon>Pseudomonadati</taxon>
        <taxon>Pseudomonadota</taxon>
        <taxon>Gammaproteobacteria</taxon>
        <taxon>Alteromonadales</taxon>
        <taxon>Shewanellaceae</taxon>
        <taxon>Shewanella</taxon>
    </lineage>
</organism>
<protein>
    <recommendedName>
        <fullName evidence="1">Ribonuclease 3</fullName>
        <ecNumber evidence="1">3.1.26.3</ecNumber>
    </recommendedName>
    <alternativeName>
        <fullName evidence="1">Ribonuclease III</fullName>
        <shortName evidence="1">RNase III</shortName>
    </alternativeName>
</protein>
<evidence type="ECO:0000255" key="1">
    <source>
        <dbReference type="HAMAP-Rule" id="MF_00104"/>
    </source>
</evidence>
<comment type="function">
    <text evidence="1">Digests double-stranded RNA. Involved in the processing of primary rRNA transcript to yield the immediate precursors to the large and small rRNAs (23S and 16S). Processes some mRNAs, and tRNAs when they are encoded in the rRNA operon. Processes pre-crRNA and tracrRNA of type II CRISPR loci if present in the organism.</text>
</comment>
<comment type="catalytic activity">
    <reaction evidence="1">
        <text>Endonucleolytic cleavage to 5'-phosphomonoester.</text>
        <dbReference type="EC" id="3.1.26.3"/>
    </reaction>
</comment>
<comment type="cofactor">
    <cofactor evidence="1">
        <name>Mg(2+)</name>
        <dbReference type="ChEBI" id="CHEBI:18420"/>
    </cofactor>
</comment>
<comment type="subunit">
    <text evidence="1">Homodimer.</text>
</comment>
<comment type="subcellular location">
    <subcellularLocation>
        <location evidence="1">Cytoplasm</location>
    </subcellularLocation>
</comment>
<comment type="similarity">
    <text evidence="1">Belongs to the ribonuclease III family.</text>
</comment>
<dbReference type="EC" id="3.1.26.3" evidence="1"/>
<dbReference type="EMBL" id="AE014299">
    <property type="protein sequence ID" value="AAN54413.1"/>
    <property type="molecule type" value="Genomic_DNA"/>
</dbReference>
<dbReference type="RefSeq" id="NP_716968.1">
    <property type="nucleotide sequence ID" value="NC_004347.2"/>
</dbReference>
<dbReference type="RefSeq" id="WP_011071557.1">
    <property type="nucleotide sequence ID" value="NC_004347.2"/>
</dbReference>
<dbReference type="SMR" id="Q8EH81"/>
<dbReference type="STRING" id="211586.SO_1348"/>
<dbReference type="PaxDb" id="211586-SO_1348"/>
<dbReference type="KEGG" id="son:SO_1348"/>
<dbReference type="PATRIC" id="fig|1028802.3.peg.757"/>
<dbReference type="eggNOG" id="COG0571">
    <property type="taxonomic scope" value="Bacteria"/>
</dbReference>
<dbReference type="HOGENOM" id="CLU_000907_1_1_6"/>
<dbReference type="OrthoDB" id="9805026at2"/>
<dbReference type="PhylomeDB" id="Q8EH81"/>
<dbReference type="BioCyc" id="SONE211586:G1GMP-1246-MONOMER"/>
<dbReference type="Proteomes" id="UP000008186">
    <property type="component" value="Chromosome"/>
</dbReference>
<dbReference type="GO" id="GO:0005829">
    <property type="term" value="C:cytosol"/>
    <property type="evidence" value="ECO:0000318"/>
    <property type="project" value="GO_Central"/>
</dbReference>
<dbReference type="GO" id="GO:0003725">
    <property type="term" value="F:double-stranded RNA binding"/>
    <property type="evidence" value="ECO:0000318"/>
    <property type="project" value="GO_Central"/>
</dbReference>
<dbReference type="GO" id="GO:0046872">
    <property type="term" value="F:metal ion binding"/>
    <property type="evidence" value="ECO:0007669"/>
    <property type="project" value="UniProtKB-KW"/>
</dbReference>
<dbReference type="GO" id="GO:0004525">
    <property type="term" value="F:ribonuclease III activity"/>
    <property type="evidence" value="ECO:0000318"/>
    <property type="project" value="GO_Central"/>
</dbReference>
<dbReference type="GO" id="GO:0019843">
    <property type="term" value="F:rRNA binding"/>
    <property type="evidence" value="ECO:0007669"/>
    <property type="project" value="UniProtKB-KW"/>
</dbReference>
<dbReference type="GO" id="GO:0006397">
    <property type="term" value="P:mRNA processing"/>
    <property type="evidence" value="ECO:0007669"/>
    <property type="project" value="UniProtKB-UniRule"/>
</dbReference>
<dbReference type="GO" id="GO:0010468">
    <property type="term" value="P:regulation of gene expression"/>
    <property type="evidence" value="ECO:0000318"/>
    <property type="project" value="GO_Central"/>
</dbReference>
<dbReference type="GO" id="GO:0006396">
    <property type="term" value="P:RNA processing"/>
    <property type="evidence" value="ECO:0000318"/>
    <property type="project" value="GO_Central"/>
</dbReference>
<dbReference type="GO" id="GO:0006364">
    <property type="term" value="P:rRNA processing"/>
    <property type="evidence" value="ECO:0007669"/>
    <property type="project" value="UniProtKB-UniRule"/>
</dbReference>
<dbReference type="GO" id="GO:0008033">
    <property type="term" value="P:tRNA processing"/>
    <property type="evidence" value="ECO:0007669"/>
    <property type="project" value="UniProtKB-KW"/>
</dbReference>
<dbReference type="CDD" id="cd10845">
    <property type="entry name" value="DSRM_RNAse_III_family"/>
    <property type="match status" value="1"/>
</dbReference>
<dbReference type="CDD" id="cd00593">
    <property type="entry name" value="RIBOc"/>
    <property type="match status" value="1"/>
</dbReference>
<dbReference type="FunFam" id="1.10.1520.10:FF:000001">
    <property type="entry name" value="Ribonuclease 3"/>
    <property type="match status" value="1"/>
</dbReference>
<dbReference type="FunFam" id="3.30.160.20:FF:000003">
    <property type="entry name" value="Ribonuclease 3"/>
    <property type="match status" value="1"/>
</dbReference>
<dbReference type="Gene3D" id="3.30.160.20">
    <property type="match status" value="1"/>
</dbReference>
<dbReference type="Gene3D" id="1.10.1520.10">
    <property type="entry name" value="Ribonuclease III domain"/>
    <property type="match status" value="1"/>
</dbReference>
<dbReference type="HAMAP" id="MF_00104">
    <property type="entry name" value="RNase_III"/>
    <property type="match status" value="1"/>
</dbReference>
<dbReference type="InterPro" id="IPR014720">
    <property type="entry name" value="dsRBD_dom"/>
</dbReference>
<dbReference type="InterPro" id="IPR011907">
    <property type="entry name" value="RNase_III"/>
</dbReference>
<dbReference type="InterPro" id="IPR000999">
    <property type="entry name" value="RNase_III_dom"/>
</dbReference>
<dbReference type="InterPro" id="IPR036389">
    <property type="entry name" value="RNase_III_sf"/>
</dbReference>
<dbReference type="NCBIfam" id="TIGR02191">
    <property type="entry name" value="RNaseIII"/>
    <property type="match status" value="1"/>
</dbReference>
<dbReference type="PANTHER" id="PTHR11207:SF0">
    <property type="entry name" value="RIBONUCLEASE 3"/>
    <property type="match status" value="1"/>
</dbReference>
<dbReference type="PANTHER" id="PTHR11207">
    <property type="entry name" value="RIBONUCLEASE III"/>
    <property type="match status" value="1"/>
</dbReference>
<dbReference type="Pfam" id="PF00035">
    <property type="entry name" value="dsrm"/>
    <property type="match status" value="1"/>
</dbReference>
<dbReference type="Pfam" id="PF14622">
    <property type="entry name" value="Ribonucleas_3_3"/>
    <property type="match status" value="1"/>
</dbReference>
<dbReference type="SMART" id="SM00358">
    <property type="entry name" value="DSRM"/>
    <property type="match status" value="1"/>
</dbReference>
<dbReference type="SMART" id="SM00535">
    <property type="entry name" value="RIBOc"/>
    <property type="match status" value="1"/>
</dbReference>
<dbReference type="SUPFAM" id="SSF54768">
    <property type="entry name" value="dsRNA-binding domain-like"/>
    <property type="match status" value="1"/>
</dbReference>
<dbReference type="SUPFAM" id="SSF69065">
    <property type="entry name" value="RNase III domain-like"/>
    <property type="match status" value="1"/>
</dbReference>
<dbReference type="PROSITE" id="PS50137">
    <property type="entry name" value="DS_RBD"/>
    <property type="match status" value="1"/>
</dbReference>
<dbReference type="PROSITE" id="PS00517">
    <property type="entry name" value="RNASE_3_1"/>
    <property type="match status" value="1"/>
</dbReference>
<dbReference type="PROSITE" id="PS50142">
    <property type="entry name" value="RNASE_3_2"/>
    <property type="match status" value="1"/>
</dbReference>
<gene>
    <name evidence="1" type="primary">rnc</name>
    <name type="ordered locus">SO_1348</name>
</gene>
<keyword id="KW-0963">Cytoplasm</keyword>
<keyword id="KW-0255">Endonuclease</keyword>
<keyword id="KW-0378">Hydrolase</keyword>
<keyword id="KW-0460">Magnesium</keyword>
<keyword id="KW-0479">Metal-binding</keyword>
<keyword id="KW-0507">mRNA processing</keyword>
<keyword id="KW-0540">Nuclease</keyword>
<keyword id="KW-1185">Reference proteome</keyword>
<keyword id="KW-0694">RNA-binding</keyword>
<keyword id="KW-0698">rRNA processing</keyword>
<keyword id="KW-0699">rRNA-binding</keyword>
<keyword id="KW-0819">tRNA processing</keyword>
<sequence>MEPIKNLPRLCRTLGYEFKNLDLLTQALTHRSAANKHNERLEFLGDSILSIVISDALYHQFPKATEGDLSRMRATLVRGDTLTLIAQAFKLGDYLFLGPGELKSGGFRRESILADAVEAIIGAIYLDSDLEVCRQLLLNWYAERLAEIQPGINQKDAKTLLQEYLQGLKKPLPDYQVINIEGDAHDQTFTVECRIDDLSQSVIGVASSRRKAEQIAAAQVLELLKK</sequence>
<name>RNC_SHEON</name>
<reference key="1">
    <citation type="journal article" date="2002" name="Nat. Biotechnol.">
        <title>Genome sequence of the dissimilatory metal ion-reducing bacterium Shewanella oneidensis.</title>
        <authorList>
            <person name="Heidelberg J.F."/>
            <person name="Paulsen I.T."/>
            <person name="Nelson K.E."/>
            <person name="Gaidos E.J."/>
            <person name="Nelson W.C."/>
            <person name="Read T.D."/>
            <person name="Eisen J.A."/>
            <person name="Seshadri R."/>
            <person name="Ward N.L."/>
            <person name="Methe B.A."/>
            <person name="Clayton R.A."/>
            <person name="Meyer T."/>
            <person name="Tsapin A."/>
            <person name="Scott J."/>
            <person name="Beanan M.J."/>
            <person name="Brinkac L.M."/>
            <person name="Daugherty S.C."/>
            <person name="DeBoy R.T."/>
            <person name="Dodson R.J."/>
            <person name="Durkin A.S."/>
            <person name="Haft D.H."/>
            <person name="Kolonay J.F."/>
            <person name="Madupu R."/>
            <person name="Peterson J.D."/>
            <person name="Umayam L.A."/>
            <person name="White O."/>
            <person name="Wolf A.M."/>
            <person name="Vamathevan J.J."/>
            <person name="Weidman J.F."/>
            <person name="Impraim M."/>
            <person name="Lee K."/>
            <person name="Berry K.J."/>
            <person name="Lee C."/>
            <person name="Mueller J."/>
            <person name="Khouri H.M."/>
            <person name="Gill J."/>
            <person name="Utterback T.R."/>
            <person name="McDonald L.A."/>
            <person name="Feldblyum T.V."/>
            <person name="Smith H.O."/>
            <person name="Venter J.C."/>
            <person name="Nealson K.H."/>
            <person name="Fraser C.M."/>
        </authorList>
    </citation>
    <scope>NUCLEOTIDE SEQUENCE [LARGE SCALE GENOMIC DNA]</scope>
    <source>
        <strain>ATCC 700550 / JCM 31522 / CIP 106686 / LMG 19005 / NCIMB 14063 / MR-1</strain>
    </source>
</reference>
<proteinExistence type="inferred from homology"/>
<accession>Q8EH81</accession>